<evidence type="ECO:0000255" key="1">
    <source>
        <dbReference type="HAMAP-Rule" id="MF_00607"/>
    </source>
</evidence>
<dbReference type="EC" id="2.1.1.182" evidence="1"/>
<dbReference type="EMBL" id="AL954747">
    <property type="protein sequence ID" value="CAD84795.1"/>
    <property type="molecule type" value="Genomic_DNA"/>
</dbReference>
<dbReference type="RefSeq" id="WP_011111495.1">
    <property type="nucleotide sequence ID" value="NC_004757.1"/>
</dbReference>
<dbReference type="SMR" id="Q82W15"/>
<dbReference type="STRING" id="228410.NE0884"/>
<dbReference type="GeneID" id="87104075"/>
<dbReference type="KEGG" id="neu:NE0884"/>
<dbReference type="eggNOG" id="COG0030">
    <property type="taxonomic scope" value="Bacteria"/>
</dbReference>
<dbReference type="HOGENOM" id="CLU_041220_0_1_4"/>
<dbReference type="OrthoDB" id="9814755at2"/>
<dbReference type="PhylomeDB" id="Q82W15"/>
<dbReference type="Proteomes" id="UP000001416">
    <property type="component" value="Chromosome"/>
</dbReference>
<dbReference type="GO" id="GO:0005829">
    <property type="term" value="C:cytosol"/>
    <property type="evidence" value="ECO:0007669"/>
    <property type="project" value="TreeGrafter"/>
</dbReference>
<dbReference type="GO" id="GO:0052908">
    <property type="term" value="F:16S rRNA (adenine(1518)-N(6)/adenine(1519)-N(6))-dimethyltransferase activity"/>
    <property type="evidence" value="ECO:0007669"/>
    <property type="project" value="UniProtKB-EC"/>
</dbReference>
<dbReference type="GO" id="GO:0003723">
    <property type="term" value="F:RNA binding"/>
    <property type="evidence" value="ECO:0007669"/>
    <property type="project" value="UniProtKB-KW"/>
</dbReference>
<dbReference type="FunFam" id="1.10.8.100:FF:000001">
    <property type="entry name" value="Ribosomal RNA small subunit methyltransferase A"/>
    <property type="match status" value="1"/>
</dbReference>
<dbReference type="Gene3D" id="1.10.8.100">
    <property type="entry name" value="Ribosomal RNA adenine dimethylase-like, domain 2"/>
    <property type="match status" value="1"/>
</dbReference>
<dbReference type="Gene3D" id="3.40.50.150">
    <property type="entry name" value="Vaccinia Virus protein VP39"/>
    <property type="match status" value="1"/>
</dbReference>
<dbReference type="HAMAP" id="MF_00607">
    <property type="entry name" value="16SrRNA_methyltr_A"/>
    <property type="match status" value="1"/>
</dbReference>
<dbReference type="InterPro" id="IPR001737">
    <property type="entry name" value="KsgA/Erm"/>
</dbReference>
<dbReference type="InterPro" id="IPR023165">
    <property type="entry name" value="rRNA_Ade_diMease-like_C"/>
</dbReference>
<dbReference type="InterPro" id="IPR020596">
    <property type="entry name" value="rRNA_Ade_Mease_Trfase_CS"/>
</dbReference>
<dbReference type="InterPro" id="IPR020598">
    <property type="entry name" value="rRNA_Ade_methylase_Trfase_N"/>
</dbReference>
<dbReference type="InterPro" id="IPR011530">
    <property type="entry name" value="rRNA_adenine_dimethylase"/>
</dbReference>
<dbReference type="InterPro" id="IPR029063">
    <property type="entry name" value="SAM-dependent_MTases_sf"/>
</dbReference>
<dbReference type="NCBIfam" id="TIGR00755">
    <property type="entry name" value="ksgA"/>
    <property type="match status" value="1"/>
</dbReference>
<dbReference type="PANTHER" id="PTHR11727">
    <property type="entry name" value="DIMETHYLADENOSINE TRANSFERASE"/>
    <property type="match status" value="1"/>
</dbReference>
<dbReference type="PANTHER" id="PTHR11727:SF7">
    <property type="entry name" value="DIMETHYLADENOSINE TRANSFERASE-RELATED"/>
    <property type="match status" value="1"/>
</dbReference>
<dbReference type="Pfam" id="PF00398">
    <property type="entry name" value="RrnaAD"/>
    <property type="match status" value="1"/>
</dbReference>
<dbReference type="SMART" id="SM00650">
    <property type="entry name" value="rADc"/>
    <property type="match status" value="1"/>
</dbReference>
<dbReference type="SUPFAM" id="SSF53335">
    <property type="entry name" value="S-adenosyl-L-methionine-dependent methyltransferases"/>
    <property type="match status" value="1"/>
</dbReference>
<dbReference type="PROSITE" id="PS01131">
    <property type="entry name" value="RRNA_A_DIMETH"/>
    <property type="match status" value="1"/>
</dbReference>
<dbReference type="PROSITE" id="PS51689">
    <property type="entry name" value="SAM_RNA_A_N6_MT"/>
    <property type="match status" value="1"/>
</dbReference>
<reference key="1">
    <citation type="journal article" date="2003" name="J. Bacteriol.">
        <title>Complete genome sequence of the ammonia-oxidizing bacterium and obligate chemolithoautotroph Nitrosomonas europaea.</title>
        <authorList>
            <person name="Chain P."/>
            <person name="Lamerdin J.E."/>
            <person name="Larimer F.W."/>
            <person name="Regala W."/>
            <person name="Lao V."/>
            <person name="Land M.L."/>
            <person name="Hauser L."/>
            <person name="Hooper A.B."/>
            <person name="Klotz M.G."/>
            <person name="Norton J."/>
            <person name="Sayavedra-Soto L.A."/>
            <person name="Arciero D.M."/>
            <person name="Hommes N.G."/>
            <person name="Whittaker M.M."/>
            <person name="Arp D.J."/>
        </authorList>
    </citation>
    <scope>NUCLEOTIDE SEQUENCE [LARGE SCALE GENOMIC DNA]</scope>
    <source>
        <strain>ATCC 19718 / CIP 103999 / KCTC 2705 / NBRC 14298</strain>
    </source>
</reference>
<proteinExistence type="inferred from homology"/>
<comment type="function">
    <text evidence="1">Specifically dimethylates two adjacent adenosines (A1518 and A1519) in the loop of a conserved hairpin near the 3'-end of 16S rRNA in the 30S particle. May play a critical role in biogenesis of 30S subunits.</text>
</comment>
<comment type="catalytic activity">
    <reaction evidence="1">
        <text>adenosine(1518)/adenosine(1519) in 16S rRNA + 4 S-adenosyl-L-methionine = N(6)-dimethyladenosine(1518)/N(6)-dimethyladenosine(1519) in 16S rRNA + 4 S-adenosyl-L-homocysteine + 4 H(+)</text>
        <dbReference type="Rhea" id="RHEA:19609"/>
        <dbReference type="Rhea" id="RHEA-COMP:10232"/>
        <dbReference type="Rhea" id="RHEA-COMP:10233"/>
        <dbReference type="ChEBI" id="CHEBI:15378"/>
        <dbReference type="ChEBI" id="CHEBI:57856"/>
        <dbReference type="ChEBI" id="CHEBI:59789"/>
        <dbReference type="ChEBI" id="CHEBI:74411"/>
        <dbReference type="ChEBI" id="CHEBI:74493"/>
        <dbReference type="EC" id="2.1.1.182"/>
    </reaction>
</comment>
<comment type="subcellular location">
    <subcellularLocation>
        <location evidence="1">Cytoplasm</location>
    </subcellularLocation>
</comment>
<comment type="similarity">
    <text evidence="1">Belongs to the class I-like SAM-binding methyltransferase superfamily. rRNA adenine N(6)-methyltransferase family. RsmA subfamily.</text>
</comment>
<accession>Q82W15</accession>
<name>RSMA_NITEU</name>
<feature type="chain" id="PRO_0000101573" description="Ribosomal RNA small subunit methyltransferase A">
    <location>
        <begin position="1"/>
        <end position="257"/>
    </location>
</feature>
<feature type="binding site" evidence="1">
    <location>
        <position position="12"/>
    </location>
    <ligand>
        <name>S-adenosyl-L-methionine</name>
        <dbReference type="ChEBI" id="CHEBI:59789"/>
    </ligand>
</feature>
<feature type="binding site" evidence="1">
    <location>
        <position position="14"/>
    </location>
    <ligand>
        <name>S-adenosyl-L-methionine</name>
        <dbReference type="ChEBI" id="CHEBI:59789"/>
    </ligand>
</feature>
<feature type="binding site" evidence="1">
    <location>
        <position position="39"/>
    </location>
    <ligand>
        <name>S-adenosyl-L-methionine</name>
        <dbReference type="ChEBI" id="CHEBI:59789"/>
    </ligand>
</feature>
<feature type="binding site" evidence="1">
    <location>
        <position position="60"/>
    </location>
    <ligand>
        <name>S-adenosyl-L-methionine</name>
        <dbReference type="ChEBI" id="CHEBI:59789"/>
    </ligand>
</feature>
<feature type="binding site" evidence="1">
    <location>
        <position position="83"/>
    </location>
    <ligand>
        <name>S-adenosyl-L-methionine</name>
        <dbReference type="ChEBI" id="CHEBI:59789"/>
    </ligand>
</feature>
<feature type="binding site" evidence="1">
    <location>
        <position position="101"/>
    </location>
    <ligand>
        <name>S-adenosyl-L-methionine</name>
        <dbReference type="ChEBI" id="CHEBI:59789"/>
    </ligand>
</feature>
<organism>
    <name type="scientific">Nitrosomonas europaea (strain ATCC 19718 / CIP 103999 / KCTC 2705 / NBRC 14298)</name>
    <dbReference type="NCBI Taxonomy" id="228410"/>
    <lineage>
        <taxon>Bacteria</taxon>
        <taxon>Pseudomonadati</taxon>
        <taxon>Pseudomonadota</taxon>
        <taxon>Betaproteobacteria</taxon>
        <taxon>Nitrosomonadales</taxon>
        <taxon>Nitrosomonadaceae</taxon>
        <taxon>Nitrosomonas</taxon>
    </lineage>
</organism>
<protein>
    <recommendedName>
        <fullName evidence="1">Ribosomal RNA small subunit methyltransferase A</fullName>
        <ecNumber evidence="1">2.1.1.182</ecNumber>
    </recommendedName>
    <alternativeName>
        <fullName evidence="1">16S rRNA (adenine(1518)-N(6)/adenine(1519)-N(6))-dimethyltransferase</fullName>
    </alternativeName>
    <alternativeName>
        <fullName evidence="1">16S rRNA dimethyladenosine transferase</fullName>
    </alternativeName>
    <alternativeName>
        <fullName evidence="1">16S rRNA dimethylase</fullName>
    </alternativeName>
    <alternativeName>
        <fullName evidence="1">S-adenosylmethionine-6-N', N'-adenosyl(rRNA) dimethyltransferase</fullName>
    </alternativeName>
</protein>
<sequence>MRHTPRKRFGQHFLVDTSVIAEIIHIIHPVPGDRMIEIGPGLGALTKPLLNVLDELQVIEIDRDIVDYLSRTYPGKLVIHNIDALKFDFSELGEGLRIIGNLPYNISTPLLFHLSRFSSLITDMYFMLQLEVVERMVALPSTPDYGRLSIMLQNRFEMEQMLVVPAESFDPPPRVQSAIVCMRPKAEPTIPLKHERLFAELVSAAFSQRRKTLRNTLRHYLTADDFERLEIDSGLRAENLSLAQYAAIVRQVYEDRQ</sequence>
<keyword id="KW-0963">Cytoplasm</keyword>
<keyword id="KW-0489">Methyltransferase</keyword>
<keyword id="KW-1185">Reference proteome</keyword>
<keyword id="KW-0694">RNA-binding</keyword>
<keyword id="KW-0698">rRNA processing</keyword>
<keyword id="KW-0949">S-adenosyl-L-methionine</keyword>
<keyword id="KW-0808">Transferase</keyword>
<gene>
    <name evidence="1" type="primary">rsmA</name>
    <name evidence="1" type="synonym">ksgA</name>
    <name type="ordered locus">NE0884</name>
</gene>